<dbReference type="EC" id="4.1.3.39"/>
<dbReference type="EMBL" id="AF079317">
    <property type="protein sequence ID" value="AAD04029.1"/>
    <property type="molecule type" value="Genomic_DNA"/>
</dbReference>
<dbReference type="PIR" id="T31305">
    <property type="entry name" value="T31305"/>
</dbReference>
<dbReference type="RefSeq" id="NP_049233.1">
    <property type="nucleotide sequence ID" value="NC_002033.1"/>
</dbReference>
<dbReference type="RefSeq" id="WP_010891051.1">
    <property type="nucleotide sequence ID" value="NC_002033.1"/>
</dbReference>
<dbReference type="SMR" id="O86013"/>
<dbReference type="OMA" id="WNRVDDY"/>
<dbReference type="OrthoDB" id="9802624at2"/>
<dbReference type="UniPathway" id="UPA00155"/>
<dbReference type="GO" id="GO:0005737">
    <property type="term" value="C:cytoplasm"/>
    <property type="evidence" value="ECO:0007669"/>
    <property type="project" value="TreeGrafter"/>
</dbReference>
<dbReference type="GO" id="GO:0008701">
    <property type="term" value="F:4-hydroxy-2-oxovalerate aldolase activity"/>
    <property type="evidence" value="ECO:0007669"/>
    <property type="project" value="UniProtKB-EC"/>
</dbReference>
<dbReference type="GO" id="GO:0016832">
    <property type="term" value="F:aldehyde-lyase activity"/>
    <property type="evidence" value="ECO:0007669"/>
    <property type="project" value="TreeGrafter"/>
</dbReference>
<dbReference type="GO" id="GO:0046872">
    <property type="term" value="F:metal ion binding"/>
    <property type="evidence" value="ECO:0007669"/>
    <property type="project" value="UniProtKB-KW"/>
</dbReference>
<dbReference type="GO" id="GO:0009056">
    <property type="term" value="P:catabolic process"/>
    <property type="evidence" value="ECO:0007669"/>
    <property type="project" value="UniProtKB-KW"/>
</dbReference>
<dbReference type="Gene3D" id="3.20.20.60">
    <property type="entry name" value="Phosphoenolpyruvate-binding domains"/>
    <property type="match status" value="1"/>
</dbReference>
<dbReference type="InterPro" id="IPR005000">
    <property type="entry name" value="Aldolase/citrate-lyase_domain"/>
</dbReference>
<dbReference type="InterPro" id="IPR050251">
    <property type="entry name" value="HpcH-HpaI_aldolase"/>
</dbReference>
<dbReference type="InterPro" id="IPR015813">
    <property type="entry name" value="Pyrv/PenolPyrv_kinase-like_dom"/>
</dbReference>
<dbReference type="InterPro" id="IPR040442">
    <property type="entry name" value="Pyrv_kinase-like_dom_sf"/>
</dbReference>
<dbReference type="PANTHER" id="PTHR30502">
    <property type="entry name" value="2-KETO-3-DEOXY-L-RHAMNONATE ALDOLASE"/>
    <property type="match status" value="1"/>
</dbReference>
<dbReference type="PANTHER" id="PTHR30502:SF0">
    <property type="entry name" value="PHOSPHOENOLPYRUVATE CARBOXYLASE FAMILY PROTEIN"/>
    <property type="match status" value="1"/>
</dbReference>
<dbReference type="Pfam" id="PF03328">
    <property type="entry name" value="HpcH_HpaI"/>
    <property type="match status" value="1"/>
</dbReference>
<dbReference type="SUPFAM" id="SSF51621">
    <property type="entry name" value="Phosphoenolpyruvate/pyruvate domain"/>
    <property type="match status" value="1"/>
</dbReference>
<proteinExistence type="inferred from homology"/>
<accession>O86013</accession>
<keyword id="KW-0058">Aromatic hydrocarbons catabolism</keyword>
<keyword id="KW-0456">Lyase</keyword>
<keyword id="KW-0460">Magnesium</keyword>
<keyword id="KW-0479">Metal-binding</keyword>
<keyword id="KW-0614">Plasmid</keyword>
<feature type="chain" id="PRO_0000207098" description="4-hydroxy-2-oxovalerate aldolase">
    <location>
        <begin position="1"/>
        <end position="262"/>
    </location>
</feature>
<feature type="active site" description="Proton acceptor" evidence="1">
    <location>
        <position position="48"/>
    </location>
</feature>
<feature type="binding site" evidence="1">
    <location>
        <position position="149"/>
    </location>
    <ligand>
        <name>substrate</name>
    </ligand>
</feature>
<feature type="binding site" evidence="1">
    <location>
        <position position="151"/>
    </location>
    <ligand>
        <name>Mg(2+)</name>
        <dbReference type="ChEBI" id="CHEBI:18420"/>
    </ligand>
</feature>
<feature type="binding site" evidence="1">
    <location>
        <position position="176"/>
    </location>
    <ligand>
        <name>substrate</name>
    </ligand>
</feature>
<feature type="binding site" evidence="1">
    <location>
        <position position="177"/>
    </location>
    <ligand>
        <name>Mg(2+)</name>
        <dbReference type="ChEBI" id="CHEBI:18420"/>
    </ligand>
</feature>
<feature type="binding site" evidence="1">
    <location>
        <position position="177"/>
    </location>
    <ligand>
        <name>substrate</name>
    </ligand>
</feature>
<feature type="site" description="Transition state stabilizer" evidence="1">
    <location>
        <position position="74"/>
    </location>
</feature>
<feature type="site" description="Increases basicity of active site His" evidence="1">
    <location>
        <position position="88"/>
    </location>
</feature>
<organism>
    <name type="scientific">Novosphingobium aromaticivorans</name>
    <name type="common">Sphingomonas aromaticivorans</name>
    <dbReference type="NCBI Taxonomy" id="48935"/>
    <lineage>
        <taxon>Bacteria</taxon>
        <taxon>Pseudomonadati</taxon>
        <taxon>Pseudomonadota</taxon>
        <taxon>Alphaproteobacteria</taxon>
        <taxon>Sphingomonadales</taxon>
        <taxon>Sphingomonadaceae</taxon>
        <taxon>Novosphingobium</taxon>
    </lineage>
</organism>
<protein>
    <recommendedName>
        <fullName>4-hydroxy-2-oxovalerate aldolase</fullName>
        <shortName>HOA</shortName>
        <ecNumber>4.1.3.39</ecNumber>
    </recommendedName>
</protein>
<name>BPHF_NOVAR</name>
<reference key="1">
    <citation type="journal article" date="1999" name="J. Bacteriol.">
        <title>Complete sequence of a 184-kilobase catabolic plasmid from Sphingomonas aromaticivorans F199.</title>
        <authorList>
            <person name="Romine M.F."/>
            <person name="Stillwell L.C."/>
            <person name="Wong K.-K."/>
            <person name="Thurston S.J."/>
            <person name="Sisk E.C."/>
            <person name="Sensen C."/>
            <person name="Gaasterland T."/>
            <person name="Fredrickson J.K."/>
            <person name="Saffer J.D."/>
        </authorList>
    </citation>
    <scope>NUCLEOTIDE SEQUENCE [GENOMIC DNA]</scope>
    <source>
        <strain>ATCC 700278 / DSM 12444 / F199</strain>
    </source>
</reference>
<comment type="function">
    <text evidence="1">Catalyzes the reversible retro-aldol cleavage of 4-hydroxy-2-oxovalerate to pyruvate and acetaldehyde.</text>
</comment>
<comment type="catalytic activity">
    <reaction>
        <text>(S)-4-hydroxy-2-oxopentanoate = acetaldehyde + pyruvate</text>
        <dbReference type="Rhea" id="RHEA:22624"/>
        <dbReference type="ChEBI" id="CHEBI:15343"/>
        <dbReference type="ChEBI" id="CHEBI:15361"/>
        <dbReference type="ChEBI" id="CHEBI:73143"/>
        <dbReference type="EC" id="4.1.3.39"/>
    </reaction>
</comment>
<comment type="pathway">
    <text>Xenobiotic degradation; biphenyl degradation.</text>
</comment>
<comment type="similarity">
    <text evidence="2">Belongs to the HpcH/HpaI aldolase family.</text>
</comment>
<sequence>MQTPVNSFKAALREGPVQLGFWLALAHPDIAEICAGQGYDWLLIDGEHGPQTLPGIVAQLRAVEATPPCSAIVRVPGHDSVTIKQVLDLGAQTLMVPMVETAEQAKAIVTASRYPPAGERGLGGARASRWGGYPAYVAEANAQVCIIAQIETATAVDNIEAIAAVDGIDALFLGPADLAATEGLLGASSFDALFKLTGEALARIVATGKPAGILSRDERLVQQFLDGGARFIANGIDSFTFAKGAGDGLRRWRERIAAQGGV</sequence>
<evidence type="ECO:0000250" key="1"/>
<evidence type="ECO:0000305" key="2"/>
<geneLocation type="plasmid">
    <name>pNL1</name>
</geneLocation>
<gene>
    <name type="primary">bphF</name>
</gene>